<organism>
    <name type="scientific">Mus musculus</name>
    <name type="common">Mouse</name>
    <dbReference type="NCBI Taxonomy" id="10090"/>
    <lineage>
        <taxon>Eukaryota</taxon>
        <taxon>Metazoa</taxon>
        <taxon>Chordata</taxon>
        <taxon>Craniata</taxon>
        <taxon>Vertebrata</taxon>
        <taxon>Euteleostomi</taxon>
        <taxon>Mammalia</taxon>
        <taxon>Eutheria</taxon>
        <taxon>Euarchontoglires</taxon>
        <taxon>Glires</taxon>
        <taxon>Rodentia</taxon>
        <taxon>Myomorpha</taxon>
        <taxon>Muroidea</taxon>
        <taxon>Muridae</taxon>
        <taxon>Murinae</taxon>
        <taxon>Mus</taxon>
        <taxon>Mus</taxon>
    </lineage>
</organism>
<feature type="chain" id="PRO_0000084595" description="Katanin p60 ATPase-containing subunit A1">
    <location>
        <begin position="1"/>
        <end position="491"/>
    </location>
</feature>
<feature type="region of interest" description="Interaction with microtubules; sufficient for microtubule severing activity" evidence="6">
    <location>
        <begin position="1"/>
        <end position="185"/>
    </location>
</feature>
<feature type="region of interest" description="Interaction with dynein and NDEL1" evidence="1">
    <location>
        <begin position="1"/>
        <end position="75"/>
    </location>
</feature>
<feature type="region of interest" description="Interaction with KATNB1">
    <location>
        <begin position="1"/>
        <end position="29"/>
    </location>
</feature>
<feature type="region of interest" description="Disordered" evidence="4">
    <location>
        <begin position="101"/>
        <end position="182"/>
    </location>
</feature>
<feature type="compositionally biased region" description="Basic and acidic residues" evidence="4">
    <location>
        <begin position="145"/>
        <end position="169"/>
    </location>
</feature>
<feature type="binding site" evidence="3">
    <location>
        <begin position="249"/>
        <end position="256"/>
    </location>
    <ligand>
        <name>ATP</name>
        <dbReference type="ChEBI" id="CHEBI:30616"/>
    </ligand>
</feature>
<feature type="modified residue" description="Phosphoserine; by DYRK2" evidence="2 3">
    <location>
        <position position="42"/>
    </location>
</feature>
<feature type="mutagenesis site" description="Disrupts KATNA1:KATNB1 interaction with ASPM." evidence="6">
    <original>L</original>
    <variation>A</variation>
    <location>
        <position position="18"/>
    </location>
</feature>
<feature type="mutagenesis site" description="Disrupts KATNA1:KATNB1 interaction with ASPM." evidence="6">
    <original>L</original>
    <variation>A</variation>
    <location>
        <position position="19"/>
    </location>
</feature>
<feature type="helix" evidence="7">
    <location>
        <begin position="3"/>
        <end position="18"/>
    </location>
</feature>
<feature type="helix" evidence="7">
    <location>
        <begin position="22"/>
        <end position="42"/>
    </location>
</feature>
<feature type="helix" evidence="7">
    <location>
        <begin position="46"/>
        <end position="74"/>
    </location>
</feature>
<dbReference type="EC" id="5.6.1.1" evidence="3"/>
<dbReference type="EMBL" id="AF153197">
    <property type="protein sequence ID" value="AAD42087.1"/>
    <property type="molecule type" value="mRNA"/>
</dbReference>
<dbReference type="EMBL" id="BC009136">
    <property type="protein sequence ID" value="AAH09136.1"/>
    <property type="molecule type" value="mRNA"/>
</dbReference>
<dbReference type="CCDS" id="CCDS23689.2"/>
<dbReference type="PDB" id="2RPA">
    <property type="method" value="NMR"/>
    <property type="chains" value="A=1-72"/>
</dbReference>
<dbReference type="PDB" id="5LB7">
    <property type="method" value="X-ray"/>
    <property type="resolution" value="1.50 A"/>
    <property type="chains" value="B=1-78"/>
</dbReference>
<dbReference type="PDB" id="5NBT">
    <property type="method" value="X-ray"/>
    <property type="resolution" value="2.40 A"/>
    <property type="chains" value="B/D=1-78"/>
</dbReference>
<dbReference type="PDB" id="6GZC">
    <property type="method" value="X-ray"/>
    <property type="resolution" value="2.00 A"/>
    <property type="chains" value="B/D=1-78"/>
</dbReference>
<dbReference type="PDBsum" id="2RPA"/>
<dbReference type="PDBsum" id="5LB7"/>
<dbReference type="PDBsum" id="5NBT"/>
<dbReference type="PDBsum" id="6GZC"/>
<dbReference type="BMRB" id="Q9WV86"/>
<dbReference type="SMR" id="Q9WV86"/>
<dbReference type="FunCoup" id="Q9WV86">
    <property type="interactions" value="1735"/>
</dbReference>
<dbReference type="IntAct" id="Q9WV86">
    <property type="interactions" value="2"/>
</dbReference>
<dbReference type="MINT" id="Q9WV86"/>
<dbReference type="STRING" id="10090.ENSMUSP00000132514"/>
<dbReference type="iPTMnet" id="Q9WV86"/>
<dbReference type="PhosphoSitePlus" id="Q9WV86"/>
<dbReference type="PaxDb" id="10090-ENSMUSP00000132514"/>
<dbReference type="ProteomicsDB" id="264957"/>
<dbReference type="Pumba" id="Q9WV86"/>
<dbReference type="AGR" id="MGI:1344353"/>
<dbReference type="MGI" id="MGI:1344353">
    <property type="gene designation" value="Katna1"/>
</dbReference>
<dbReference type="eggNOG" id="KOG0738">
    <property type="taxonomic scope" value="Eukaryota"/>
</dbReference>
<dbReference type="InParanoid" id="Q9WV86"/>
<dbReference type="PhylomeDB" id="Q9WV86"/>
<dbReference type="BRENDA" id="5.6.1.1">
    <property type="organism ID" value="3474"/>
</dbReference>
<dbReference type="ChiTaRS" id="Katna1">
    <property type="organism name" value="mouse"/>
</dbReference>
<dbReference type="EvolutionaryTrace" id="Q9WV86"/>
<dbReference type="PRO" id="PR:Q9WV86"/>
<dbReference type="Proteomes" id="UP000000589">
    <property type="component" value="Unplaced"/>
</dbReference>
<dbReference type="RNAct" id="Q9WV86">
    <property type="molecule type" value="protein"/>
</dbReference>
<dbReference type="GO" id="GO:0030424">
    <property type="term" value="C:axon"/>
    <property type="evidence" value="ECO:0000314"/>
    <property type="project" value="MGI"/>
</dbReference>
<dbReference type="GO" id="GO:0005813">
    <property type="term" value="C:centrosome"/>
    <property type="evidence" value="ECO:0000314"/>
    <property type="project" value="MGI"/>
</dbReference>
<dbReference type="GO" id="GO:0031463">
    <property type="term" value="C:Cul3-RING ubiquitin ligase complex"/>
    <property type="evidence" value="ECO:0000250"/>
    <property type="project" value="UniProtKB"/>
</dbReference>
<dbReference type="GO" id="GO:0005737">
    <property type="term" value="C:cytoplasm"/>
    <property type="evidence" value="ECO:0000250"/>
    <property type="project" value="UniProtKB"/>
</dbReference>
<dbReference type="GO" id="GO:0005811">
    <property type="term" value="C:lipid droplet"/>
    <property type="evidence" value="ECO:0000314"/>
    <property type="project" value="MGI"/>
</dbReference>
<dbReference type="GO" id="GO:0005874">
    <property type="term" value="C:microtubule"/>
    <property type="evidence" value="ECO:0007669"/>
    <property type="project" value="UniProtKB-KW"/>
</dbReference>
<dbReference type="GO" id="GO:0030496">
    <property type="term" value="C:midbody"/>
    <property type="evidence" value="ECO:0000250"/>
    <property type="project" value="UniProtKB"/>
</dbReference>
<dbReference type="GO" id="GO:0097431">
    <property type="term" value="C:mitotic spindle pole"/>
    <property type="evidence" value="ECO:0000250"/>
    <property type="project" value="UniProtKB"/>
</dbReference>
<dbReference type="GO" id="GO:0005634">
    <property type="term" value="C:nucleus"/>
    <property type="evidence" value="ECO:0000314"/>
    <property type="project" value="MGI"/>
</dbReference>
<dbReference type="GO" id="GO:0005886">
    <property type="term" value="C:plasma membrane"/>
    <property type="evidence" value="ECO:0000314"/>
    <property type="project" value="MGI"/>
</dbReference>
<dbReference type="GO" id="GO:0005819">
    <property type="term" value="C:spindle"/>
    <property type="evidence" value="ECO:0000250"/>
    <property type="project" value="UniProtKB"/>
</dbReference>
<dbReference type="GO" id="GO:0000922">
    <property type="term" value="C:spindle pole"/>
    <property type="evidence" value="ECO:0000250"/>
    <property type="project" value="UniProtKB"/>
</dbReference>
<dbReference type="GO" id="GO:0005524">
    <property type="term" value="F:ATP binding"/>
    <property type="evidence" value="ECO:0007669"/>
    <property type="project" value="UniProtKB-KW"/>
</dbReference>
<dbReference type="GO" id="GO:0016887">
    <property type="term" value="F:ATP hydrolysis activity"/>
    <property type="evidence" value="ECO:0000314"/>
    <property type="project" value="MGI"/>
</dbReference>
<dbReference type="GO" id="GO:0070840">
    <property type="term" value="F:dynein complex binding"/>
    <property type="evidence" value="ECO:0000314"/>
    <property type="project" value="MGI"/>
</dbReference>
<dbReference type="GO" id="GO:0008017">
    <property type="term" value="F:microtubule binding"/>
    <property type="evidence" value="ECO:0007669"/>
    <property type="project" value="UniProtKB-UniRule"/>
</dbReference>
<dbReference type="GO" id="GO:0008568">
    <property type="term" value="F:microtubule severing ATPase activity"/>
    <property type="evidence" value="ECO:0007669"/>
    <property type="project" value="UniProtKB-EC"/>
</dbReference>
<dbReference type="GO" id="GO:0051301">
    <property type="term" value="P:cell division"/>
    <property type="evidence" value="ECO:0007669"/>
    <property type="project" value="UniProtKB-KW"/>
</dbReference>
<dbReference type="GO" id="GO:0031122">
    <property type="term" value="P:cytoplasmic microtubule organization"/>
    <property type="evidence" value="ECO:0000314"/>
    <property type="project" value="MGI"/>
</dbReference>
<dbReference type="GO" id="GO:0001578">
    <property type="term" value="P:microtubule bundle formation"/>
    <property type="evidence" value="ECO:0000316"/>
    <property type="project" value="MGI"/>
</dbReference>
<dbReference type="GO" id="GO:0051013">
    <property type="term" value="P:microtubule severing"/>
    <property type="evidence" value="ECO:0000316"/>
    <property type="project" value="MGI"/>
</dbReference>
<dbReference type="GO" id="GO:0001764">
    <property type="term" value="P:neuron migration"/>
    <property type="evidence" value="ECO:0000315"/>
    <property type="project" value="MGI"/>
</dbReference>
<dbReference type="GO" id="GO:0008104">
    <property type="term" value="P:protein localization"/>
    <property type="evidence" value="ECO:0000353"/>
    <property type="project" value="MGI"/>
</dbReference>
<dbReference type="CDD" id="cd21748">
    <property type="entry name" value="Kp60-NTD"/>
    <property type="match status" value="1"/>
</dbReference>
<dbReference type="CDD" id="cd19522">
    <property type="entry name" value="RecA-like_KTNA1"/>
    <property type="match status" value="1"/>
</dbReference>
<dbReference type="FunFam" id="1.10.8.60:FF:000025">
    <property type="entry name" value="Katanin p60 ATPase-containing subunit A1"/>
    <property type="match status" value="1"/>
</dbReference>
<dbReference type="FunFam" id="1.20.58.80:FF:000003">
    <property type="entry name" value="Katanin p60 ATPase-containing subunit A1"/>
    <property type="match status" value="1"/>
</dbReference>
<dbReference type="FunFam" id="3.40.50.300:FF:000159">
    <property type="entry name" value="Katanin p60 ATPase-containing subunit A1"/>
    <property type="match status" value="1"/>
</dbReference>
<dbReference type="Gene3D" id="1.10.8.60">
    <property type="match status" value="1"/>
</dbReference>
<dbReference type="Gene3D" id="3.40.50.300">
    <property type="entry name" value="P-loop containing nucleotide triphosphate hydrolases"/>
    <property type="match status" value="1"/>
</dbReference>
<dbReference type="Gene3D" id="1.20.58.80">
    <property type="entry name" value="Phosphotransferase system, lactose/cellobiose-type IIA subunit"/>
    <property type="match status" value="1"/>
</dbReference>
<dbReference type="HAMAP" id="MF_03023">
    <property type="entry name" value="Katanin_p60_A1"/>
    <property type="match status" value="1"/>
</dbReference>
<dbReference type="InterPro" id="IPR003593">
    <property type="entry name" value="AAA+_ATPase"/>
</dbReference>
<dbReference type="InterPro" id="IPR041569">
    <property type="entry name" value="AAA_lid_3"/>
</dbReference>
<dbReference type="InterPro" id="IPR003959">
    <property type="entry name" value="ATPase_AAA_core"/>
</dbReference>
<dbReference type="InterPro" id="IPR003960">
    <property type="entry name" value="ATPase_AAA_CS"/>
</dbReference>
<dbReference type="InterPro" id="IPR028596">
    <property type="entry name" value="KATNA1"/>
</dbReference>
<dbReference type="InterPro" id="IPR048611">
    <property type="entry name" value="KATNA1_MIT"/>
</dbReference>
<dbReference type="InterPro" id="IPR048612">
    <property type="entry name" value="KTNA1_AAA_dom"/>
</dbReference>
<dbReference type="InterPro" id="IPR036181">
    <property type="entry name" value="MIT_dom_sf"/>
</dbReference>
<dbReference type="InterPro" id="IPR050304">
    <property type="entry name" value="MT-severing_AAA_ATPase"/>
</dbReference>
<dbReference type="InterPro" id="IPR027417">
    <property type="entry name" value="P-loop_NTPase"/>
</dbReference>
<dbReference type="InterPro" id="IPR015415">
    <property type="entry name" value="Spast_Vps4_C"/>
</dbReference>
<dbReference type="PANTHER" id="PTHR23074">
    <property type="entry name" value="AAA DOMAIN-CONTAINING"/>
    <property type="match status" value="1"/>
</dbReference>
<dbReference type="PANTHER" id="PTHR23074:SF71">
    <property type="entry name" value="KATANIN P60 ATPASE-CONTAINING SUBUNIT A1"/>
    <property type="match status" value="1"/>
</dbReference>
<dbReference type="Pfam" id="PF00004">
    <property type="entry name" value="AAA"/>
    <property type="match status" value="1"/>
</dbReference>
<dbReference type="Pfam" id="PF17862">
    <property type="entry name" value="AAA_lid_3"/>
    <property type="match status" value="1"/>
</dbReference>
<dbReference type="Pfam" id="PF21126">
    <property type="entry name" value="KATNA1_MIT"/>
    <property type="match status" value="1"/>
</dbReference>
<dbReference type="Pfam" id="PF09336">
    <property type="entry name" value="Vps4_C"/>
    <property type="match status" value="1"/>
</dbReference>
<dbReference type="SMART" id="SM00382">
    <property type="entry name" value="AAA"/>
    <property type="match status" value="1"/>
</dbReference>
<dbReference type="SUPFAM" id="SSF116846">
    <property type="entry name" value="MIT domain"/>
    <property type="match status" value="1"/>
</dbReference>
<dbReference type="SUPFAM" id="SSF52540">
    <property type="entry name" value="P-loop containing nucleoside triphosphate hydrolases"/>
    <property type="match status" value="1"/>
</dbReference>
<dbReference type="PROSITE" id="PS00674">
    <property type="entry name" value="AAA"/>
    <property type="match status" value="1"/>
</dbReference>
<proteinExistence type="evidence at protein level"/>
<reference key="1">
    <citation type="journal article" date="1999" name="Mol. Cell">
        <title>Lipotransin: a novel docking protein for hormone-sensitive lipase.</title>
        <authorList>
            <person name="Syu L.-J."/>
            <person name="Saltiel A.R."/>
        </authorList>
    </citation>
    <scope>NUCLEOTIDE SEQUENCE [MRNA]</scope>
</reference>
<reference key="2">
    <citation type="journal article" date="2004" name="Genome Res.">
        <title>The status, quality, and expansion of the NIH full-length cDNA project: the Mammalian Gene Collection (MGC).</title>
        <authorList>
            <consortium name="The MGC Project Team"/>
        </authorList>
    </citation>
    <scope>NUCLEOTIDE SEQUENCE [LARGE SCALE MRNA]</scope>
    <source>
        <strain>FVB/N</strain>
        <tissue>Mammary tumor</tissue>
    </source>
</reference>
<reference key="3">
    <citation type="journal article" date="2004" name="J. Neurosci.">
        <title>Axonal growth is sensitive to the levels of katanin, a protein that severs microtubules.</title>
        <authorList>
            <person name="Karabay A."/>
            <person name="Yu W."/>
            <person name="Solowska J.M."/>
            <person name="Baird D.H."/>
            <person name="Baas P.W."/>
        </authorList>
    </citation>
    <scope>DEVELOPMENTAL STAGE</scope>
</reference>
<reference key="4">
    <citation type="journal article" date="2017" name="Nat. Cell Biol.">
        <title>Microtubule minus-end regulation at spindle poles by an ASPM-katanin complex.</title>
        <authorList>
            <person name="Jiang K."/>
            <person name="Rezabkova L."/>
            <person name="Hua S."/>
            <person name="Liu Q."/>
            <person name="Capitani G."/>
            <person name="Maarten Altelaar A.F."/>
            <person name="Heck A.J.R."/>
            <person name="Kammerer R.A."/>
            <person name="Steinmetz M.O."/>
            <person name="Akhmanova A."/>
        </authorList>
    </citation>
    <scope>X-RAY CRYSTALLOGRAPHY (1.5 ANGSTROMS) OF 1-78 IN COMPLEX WITH KATNB1</scope>
    <scope>FUNCTION</scope>
    <scope>INTERACTION WITH ASPM</scope>
    <scope>MUTAGENESIS OF LEU-18 AND LEU-19</scope>
</reference>
<sequence length="491" mass="55949">MSLQMIVENVKLAREYALLGNYDSAMVYYQGVLDQMNKYLYSVKDTHLRQKWQQVWQEINVEAKQVKDIMKTLESFKLDITSLQAAQHELPAAEGEVWSLPVPVERRPLPGPRKRQSSQHSDPKPHSNRPSTVVRAHRPSPQNLHNDRGKAVRSREKKEQSKGREEKNKLPAAVTEPEANKFDGTGYDKDLVEALERDIISQNPNVRWYDIADLVEAKKLLQEAVVLPMWMPEFFKGIRRPWKGVLMVGPPGTGKTLLAKAVATECKTTFFNVSSSTLTSKYRGESEKLVRLLFEMARFYSPATIFIDEIDSICSRRGTSEEHEASRRMKAELLVQMDGVGGASENDDPSKMVMVLAATNFPWDIDEALRRRLEKRIYIPLPSAKGREELLRISLRELELADDVNLASIAENMEGYSGADITNVCRDASLMAMRRRIEGLTPEEIRNLSREAMHMPTTMEDFEMALKKISKSVSAADIERYEKWIVEFGSC</sequence>
<name>KTNA1_MOUSE</name>
<evidence type="ECO:0000250" key="1"/>
<evidence type="ECO:0000250" key="2">
    <source>
        <dbReference type="UniProtKB" id="O75449"/>
    </source>
</evidence>
<evidence type="ECO:0000255" key="3">
    <source>
        <dbReference type="HAMAP-Rule" id="MF_03023"/>
    </source>
</evidence>
<evidence type="ECO:0000256" key="4">
    <source>
        <dbReference type="SAM" id="MobiDB-lite"/>
    </source>
</evidence>
<evidence type="ECO:0000269" key="5">
    <source>
    </source>
</evidence>
<evidence type="ECO:0000269" key="6">
    <source>
    </source>
</evidence>
<evidence type="ECO:0007829" key="7">
    <source>
        <dbReference type="PDB" id="5LB7"/>
    </source>
</evidence>
<accession>Q9WV86</accession>
<keyword id="KW-0002">3D-structure</keyword>
<keyword id="KW-0067">ATP-binding</keyword>
<keyword id="KW-0131">Cell cycle</keyword>
<keyword id="KW-0132">Cell division</keyword>
<keyword id="KW-0963">Cytoplasm</keyword>
<keyword id="KW-0206">Cytoskeleton</keyword>
<keyword id="KW-0413">Isomerase</keyword>
<keyword id="KW-0493">Microtubule</keyword>
<keyword id="KW-0498">Mitosis</keyword>
<keyword id="KW-0547">Nucleotide-binding</keyword>
<keyword id="KW-0597">Phosphoprotein</keyword>
<keyword id="KW-1185">Reference proteome</keyword>
<keyword id="KW-0832">Ubl conjugation</keyword>
<protein>
    <recommendedName>
        <fullName evidence="3">Katanin p60 ATPase-containing subunit A1</fullName>
        <shortName evidence="3">Katanin p60 subunit A1</shortName>
        <ecNumber evidence="3">5.6.1.1</ecNumber>
    </recommendedName>
    <alternativeName>
        <fullName>Lipotransin</fullName>
    </alternativeName>
    <alternativeName>
        <fullName evidence="3">p60 katanin</fullName>
    </alternativeName>
</protein>
<gene>
    <name type="primary">Katna1</name>
</gene>
<comment type="function">
    <text evidence="3 6">Catalytic subunit of a complex which severs microtubules in an ATP-dependent manner. Microtubule severing may promote rapid reorganization of cellular microtubule arrays and the release of microtubules from the centrosome following nucleation. Microtubule release from the mitotic spindle poles may allow depolymerization of the microtubule end proximal to the spindle pole, leading to poleward microtubule flux and poleward motion of chromosome. The function in regulating microtubule dynamics at spindle poles seems to depend on the association of the katanin KATNA1:KATNB1 complex with ASPM which recruits it to microtubules. Reversely KATNA1:KATNB1 can enhance ASPM blocking activity on microtubule minus-end growth. Microtubule release within the cell body of neurons may be required for their transport into neuronal processes by microtubule-dependent motor proteins. This transport is required for axonal growth.</text>
</comment>
<comment type="catalytic activity">
    <reaction evidence="3">
        <text>n ATP + n H2O + a microtubule = n ADP + n phosphate + (n+1) alpha/beta tubulin heterodimers.</text>
        <dbReference type="EC" id="5.6.1.1"/>
    </reaction>
</comment>
<comment type="activity regulation">
    <text evidence="3">ATPase activity is stimulated by microtubules, which promote homooligomerization. ATP-dependent microtubule severing is stimulated by interaction with KATNB1.</text>
</comment>
<comment type="subunit">
    <text evidence="2 3 6">Can homooligomerize into hexameric rings, which may be promoted by interaction with microtubules. Interacts with KATNB1, which may serve as a targeting subunit (By similarity). Interacts with ASPM; the katanin complex formation KATNA1:KATNB1 is required for the association of ASPM (PubMed:28436967). Interacts with dynein and NDEL1. Associates with the E3 ligase complex containing DYRK2, EDD/UBR5, DDB1 and DCAF1 proteins (EDVP complex). Interacts with KLHL42 (via the kelch domains). Interacts with CUL3; the interaction is enhanced by KLHL42 (By similarity). Interacts with KATNB1 and KATNBL1 (By similarity). Interacts with CAMSAP2 and CAMSAP3; leading to regulate the length of CAMSAP-decorated microtubule stretches (By similarity).</text>
</comment>
<comment type="interaction">
    <interactant intactId="EBI-7692898">
        <id>Q9WV86</id>
    </interactant>
    <interactant intactId="EBI-7692933">
        <id>Q8BG40</id>
        <label>Katnb1</label>
    </interactant>
    <organismsDiffer>false</organismsDiffer>
    <experiments>8</experiments>
</comment>
<comment type="subcellular location">
    <subcellularLocation>
        <location evidence="3">Cytoplasm</location>
    </subcellularLocation>
    <subcellularLocation>
        <location evidence="3">Midbody</location>
    </subcellularLocation>
    <subcellularLocation>
        <location evidence="3">Cytoplasm</location>
        <location evidence="3">Cytoskeleton</location>
        <location evidence="3">Microtubule organizing center</location>
        <location evidence="3">Centrosome</location>
    </subcellularLocation>
    <subcellularLocation>
        <location evidence="3">Cytoplasm</location>
        <location evidence="3">Cytoskeleton</location>
        <location evidence="3">Spindle pole</location>
    </subcellularLocation>
    <subcellularLocation>
        <location evidence="2">Cytoplasm</location>
        <location evidence="2">Cytoskeleton</location>
        <location evidence="2">Spindle</location>
    </subcellularLocation>
    <text evidence="2 3">Predominantly cytoplasmic. Localized diffusely in the cytoplasm during the interphase. During metaphase is localized throughout the cell and more widely dispersed than the microtubules. In anaphase and telophase is localized at the midbody region. Also localized to the interphase centrosome and the mitotic spindle poles. Enhanced recruitment to the mitotic spindle poles requires microtubules and interaction with KATNB1 (By similarity). Localizes within the cytoplasm, partially overlapping with microtubules, in interphase and to the mitotic spindle and spindle poles during mitosis (By similarity).</text>
</comment>
<comment type="developmental stage">
    <text evidence="5">Elevated during early neuronal development. Expressed in dorsal root ganglia and peripheral and central processes of sensory neurons at 13 dpc. Also expressed in neurons and axons of the embryonic tectum at 13 dpc, and in the cerebral cortex at 16 dpc. Highly expressed in layers containing hippocampal neurons at P1, with expression becoming undetectable by P8.</text>
</comment>
<comment type="domain">
    <text evidence="3">The N-terminus is sufficient for interaction with microtubules, although high affinity binding to microtubules also requires an intact C-terminal domain and ATP, which promotes oligomerization.</text>
</comment>
<comment type="PTM">
    <text evidence="3">Phosphorylation by DYRK2 triggers ubiquitination and subsequent degradation.</text>
</comment>
<comment type="PTM">
    <text evidence="3">Ubiquitinated by the BCR(KLHL42) E3 ubiquitin ligase complex, leading to its proteasomal degradation. Ubiquitinated by the EDVP E3 ligase complex and subsequently targeted for proteasomal degradation.</text>
</comment>
<comment type="similarity">
    <text evidence="3">Belongs to the AAA ATPase family. Katanin p60 subunit A1 subfamily.</text>
</comment>